<dbReference type="EC" id="4.2.3.162" evidence="2 3 4"/>
<dbReference type="EMBL" id="GG657757">
    <property type="protein sequence ID" value="EFL30447.1"/>
    <property type="molecule type" value="Genomic_DNA"/>
</dbReference>
<dbReference type="SMR" id="D9XDR8"/>
<dbReference type="STRING" id="591159.SSQG_00965"/>
<dbReference type="HOGENOM" id="CLU_042538_4_2_11"/>
<dbReference type="BRENDA" id="4.2.3.162">
    <property type="organism ID" value="6116"/>
</dbReference>
<dbReference type="UniPathway" id="UPA00213"/>
<dbReference type="Proteomes" id="UP000004184">
    <property type="component" value="Unassembled WGS sequence"/>
</dbReference>
<dbReference type="GO" id="GO:0016829">
    <property type="term" value="F:lyase activity"/>
    <property type="evidence" value="ECO:0007669"/>
    <property type="project" value="UniProtKB-KW"/>
</dbReference>
<dbReference type="GO" id="GO:0046872">
    <property type="term" value="F:metal ion binding"/>
    <property type="evidence" value="ECO:0007669"/>
    <property type="project" value="UniProtKB-KW"/>
</dbReference>
<dbReference type="GO" id="GO:0016114">
    <property type="term" value="P:terpenoid biosynthetic process"/>
    <property type="evidence" value="ECO:0007669"/>
    <property type="project" value="UniProtKB-UniPathway"/>
</dbReference>
<dbReference type="Gene3D" id="1.10.600.10">
    <property type="entry name" value="Farnesyl Diphosphate Synthase"/>
    <property type="match status" value="1"/>
</dbReference>
<dbReference type="InterPro" id="IPR048138">
    <property type="entry name" value="Amorph_synthase"/>
</dbReference>
<dbReference type="InterPro" id="IPR008949">
    <property type="entry name" value="Isoprenoid_synthase_dom_sf"/>
</dbReference>
<dbReference type="NCBIfam" id="NF041563">
    <property type="entry name" value="amorph_syn"/>
    <property type="match status" value="1"/>
</dbReference>
<dbReference type="Pfam" id="PF19086">
    <property type="entry name" value="Terpene_syn_C_2"/>
    <property type="match status" value="1"/>
</dbReference>
<dbReference type="SUPFAM" id="SSF48576">
    <property type="entry name" value="Terpenoid synthases"/>
    <property type="match status" value="1"/>
</dbReference>
<reference key="1">
    <citation type="submission" date="2009-02" db="EMBL/GenBank/DDBJ databases">
        <title>Annotation of Streptomyces viridochromogenes strain DSM 40736.</title>
        <authorList>
            <consortium name="The Broad Institute Genome Sequencing Platform"/>
            <consortium name="Broad Institute Microbial Sequencing Center"/>
            <person name="Fischbach M."/>
            <person name="Godfrey P."/>
            <person name="Ward D."/>
            <person name="Young S."/>
            <person name="Zeng Q."/>
            <person name="Koehrsen M."/>
            <person name="Alvarado L."/>
            <person name="Berlin A.M."/>
            <person name="Bochicchio J."/>
            <person name="Borenstein D."/>
            <person name="Chapman S.B."/>
            <person name="Chen Z."/>
            <person name="Engels R."/>
            <person name="Freedman E."/>
            <person name="Gellesch M."/>
            <person name="Goldberg J."/>
            <person name="Griggs A."/>
            <person name="Gujja S."/>
            <person name="Heilman E.R."/>
            <person name="Heiman D.I."/>
            <person name="Hepburn T.A."/>
            <person name="Howarth C."/>
            <person name="Jen D."/>
            <person name="Larson L."/>
            <person name="Lewis B."/>
            <person name="Mehta T."/>
            <person name="Park D."/>
            <person name="Pearson M."/>
            <person name="Richards J."/>
            <person name="Roberts A."/>
            <person name="Saif S."/>
            <person name="Shea T.D."/>
            <person name="Shenoy N."/>
            <person name="Sisk P."/>
            <person name="Stolte C."/>
            <person name="Sykes S.N."/>
            <person name="Thomson T."/>
            <person name="Walk T."/>
            <person name="White J."/>
            <person name="Yandava C."/>
            <person name="Straight P."/>
            <person name="Clardy J."/>
            <person name="Hung D."/>
            <person name="Kolter R."/>
            <person name="Mekalanos J."/>
            <person name="Walker S."/>
            <person name="Walsh C.T."/>
            <person name="Wieland-Brown L.C."/>
            <person name="Haas B."/>
            <person name="Nusbaum C."/>
            <person name="Birren B."/>
        </authorList>
    </citation>
    <scope>NUCLEOTIDE SEQUENCE [LARGE SCALE GENOMIC DNA]</scope>
    <source>
        <strain evidence="9">DSM 40736 / JCM 4977 / BCRC 1201 / Tue 494</strain>
    </source>
</reference>
<reference key="2">
    <citation type="journal article" date="2013" name="Angew. Chem. Int. Ed.">
        <title>Rapid chemical characterization of bacterial terpene synthases.</title>
        <authorList>
            <person name="Rabe P."/>
            <person name="Dickschat J.S."/>
        </authorList>
    </citation>
    <scope>FUNCTION</scope>
    <scope>CATALYTIC ACTIVITY</scope>
    <source>
        <strain>DSM 40736 / JCM 4977 / BCRC 1201 / Tue 494</strain>
    </source>
</reference>
<reference key="3">
    <citation type="journal article" date="2016" name="Angew. Chem. Int. Ed.">
        <title>Lessons from 1,3-hydride shifts in sesquiterpene cyclizations.</title>
        <authorList>
            <person name="Rinkel J."/>
            <person name="Rabe P."/>
            <person name="Garbeva P."/>
            <person name="Dickschat J.S."/>
        </authorList>
    </citation>
    <scope>FUNCTION</scope>
    <scope>CATALYTIC ACTIVITY</scope>
    <scope>REACTION MECHANISM</scope>
    <source>
        <strain>DSM 40736 / JCM 4977 / BCRC 1201 / Tue 494</strain>
    </source>
</reference>
<reference key="4">
    <citation type="journal article" date="2016" name="Beilstein J. Org. Chem.">
        <title>Mechanistic investigations on six bacterial terpene cyclases.</title>
        <authorList>
            <person name="Rabe P."/>
            <person name="Schmitz T."/>
            <person name="Dickschat J.S."/>
        </authorList>
    </citation>
    <scope>FUNCTION</scope>
    <scope>CATALYTIC ACTIVITY</scope>
    <scope>SUBSTRATE SPECIFICITY</scope>
    <scope>DOMAIN</scope>
    <scope>PATHWAY</scope>
    <source>
        <strain>DSM 40736 / JCM 4977 / BCRC 1201 / Tue 494</strain>
    </source>
</reference>
<sequence>MAKMSTTHEEIALAGPDGIPAVDLRDLIDAQLYMPFPFERNPHASEAAAGVDHWLSTWGLTDDPAVAAMISCTRPAELAAFNGPDMDSGLLQIAANQIAYQFVFDDRAEDIGRHSPGRLLPMLSESVAILRDGQPPTTPLGAALADLHRQVQERCTPAQAARWAWNSREYVHGLLYEAVAQAHPAPVESGLCRSIRSLIAGVEPFYPLCEAAQRCELAPEELHHPAMRRLSRLSADAAVWIPDLFSAVKEQRAGGMINLALAYRRTHRCSLPAAVTLAVRHINSTIREFEDLYGEVRPELSPSGIGYVEGMAGWIRGCYFWSRTVPRYADTLTAPAGL</sequence>
<organism>
    <name type="scientific">Streptomyces viridochromogenes (strain DSM 40736 / JCM 4977 / BCRC 1201 / Tue 494)</name>
    <dbReference type="NCBI Taxonomy" id="591159"/>
    <lineage>
        <taxon>Bacteria</taxon>
        <taxon>Bacillati</taxon>
        <taxon>Actinomycetota</taxon>
        <taxon>Actinomycetes</taxon>
        <taxon>Kitasatosporales</taxon>
        <taxon>Streptomycetaceae</taxon>
        <taxon>Streptomyces</taxon>
    </lineage>
</organism>
<accession>D9XDR8</accession>
<name>AAMS_STRVT</name>
<feature type="chain" id="PRO_0000443240" description="(-)-alpha-amorphene synthase ((2E,6E)-farnesyl diphosphate cyclizing)">
    <location>
        <begin position="1"/>
        <end position="338"/>
    </location>
</feature>
<feature type="short sequence motif" description="DDXXE motif" evidence="7">
    <location>
        <begin position="105"/>
        <end position="109"/>
    </location>
</feature>
<feature type="binding site" evidence="1">
    <location>
        <position position="105"/>
    </location>
    <ligand>
        <name>Mg(2+)</name>
        <dbReference type="ChEBI" id="CHEBI:18420"/>
        <label>1</label>
    </ligand>
</feature>
<feature type="binding site" evidence="1">
    <location>
        <position position="109"/>
    </location>
    <ligand>
        <name>Mg(2+)</name>
        <dbReference type="ChEBI" id="CHEBI:18420"/>
        <label>1</label>
    </ligand>
</feature>
<feature type="binding site" evidence="1">
    <location>
        <position position="109"/>
    </location>
    <ligand>
        <name>Mg(2+)</name>
        <dbReference type="ChEBI" id="CHEBI:18420"/>
        <label>2</label>
    </ligand>
</feature>
<feature type="binding site" evidence="1">
    <location>
        <position position="196"/>
    </location>
    <ligand>
        <name>substrate</name>
    </ligand>
</feature>
<feature type="binding site" evidence="1">
    <location>
        <position position="246"/>
    </location>
    <ligand>
        <name>Mg(2+)</name>
        <dbReference type="ChEBI" id="CHEBI:18420"/>
        <label>3</label>
    </ligand>
</feature>
<feature type="binding site" evidence="1">
    <location>
        <position position="249"/>
    </location>
    <ligand>
        <name>substrate</name>
    </ligand>
</feature>
<feature type="binding site" evidence="1">
    <location>
        <position position="250"/>
    </location>
    <ligand>
        <name>Mg(2+)</name>
        <dbReference type="ChEBI" id="CHEBI:18420"/>
        <label>3</label>
    </ligand>
</feature>
<feature type="binding site" evidence="1">
    <location>
        <begin position="327"/>
        <end position="328"/>
    </location>
    <ligand>
        <name>substrate</name>
    </ligand>
</feature>
<feature type="site" description="Plays a critical role in the stabilization of intermediate cation" evidence="1">
    <location>
        <position position="102"/>
    </location>
</feature>
<feature type="site" description="Plays a critical role for substrate recognition" evidence="1">
    <location>
        <position position="106"/>
    </location>
</feature>
<feature type="site" description="Plays a critical role for substrate recognition" evidence="1">
    <location>
        <position position="177"/>
    </location>
</feature>
<keyword id="KW-0456">Lyase</keyword>
<keyword id="KW-0460">Magnesium</keyword>
<keyword id="KW-0479">Metal-binding</keyword>
<keyword id="KW-1185">Reference proteome</keyword>
<proteinExistence type="evidence at protein level"/>
<comment type="function">
    <text evidence="2 3 4">Catalyzes the conversion of (2E,6E)-farnesyl diphosphate (FPP) to yield the bicyclic sesquiterpene (1R,6S,7S)-(-)-alpha-amorphene via a probable 1,6-cyclization, which could involve the abstraction of the pyrophosphate from FPP to yield a (R)-bisabolyl cation (PubMed:23307484, PubMed:27666571, PubMed:27829890). The only accepted substrate is (2E,6E)-farnesyl diphosphate (FPP) (PubMed:27829890).</text>
</comment>
<comment type="catalytic activity">
    <reaction evidence="2 3 4">
        <text>(2E,6E)-farnesyl diphosphate = (-)-alpha-amorphene + diphosphate</text>
        <dbReference type="Rhea" id="RHEA:53640"/>
        <dbReference type="ChEBI" id="CHEBI:33019"/>
        <dbReference type="ChEBI" id="CHEBI:137533"/>
        <dbReference type="ChEBI" id="CHEBI:175763"/>
        <dbReference type="EC" id="4.2.3.162"/>
    </reaction>
</comment>
<comment type="cofactor">
    <cofactor evidence="1">
        <name>Mg(2+)</name>
        <dbReference type="ChEBI" id="CHEBI:18420"/>
    </cofactor>
    <text evidence="1">Binds 3 Mg(2+) ions per subunit.</text>
</comment>
<comment type="pathway">
    <text evidence="7">Secondary metabolite biosynthesis; terpenoid biosynthesis.</text>
</comment>
<comment type="domain">
    <text evidence="7">The Asp-Asp-Xaa-Xaa-Glu (DDXXE) motif is important for the catalytic activity, presumably through binding to Mg(2+).</text>
</comment>
<comment type="similarity">
    <text evidence="6">Belongs to the terpene synthase family.</text>
</comment>
<protein>
    <recommendedName>
        <fullName evidence="5">(-)-alpha-amorphene synthase ((2E,6E)-farnesyl diphosphate cyclizing)</fullName>
        <ecNumber evidence="2 3 4">4.2.3.162</ecNumber>
    </recommendedName>
    <alternativeName>
        <fullName evidence="5">Terpene synthase</fullName>
    </alternativeName>
    <alternativeName>
        <fullName evidence="5">Type I terpene cyclase</fullName>
    </alternativeName>
</protein>
<gene>
    <name evidence="8" type="ORF">SSQG_00965</name>
</gene>
<evidence type="ECO:0000250" key="1">
    <source>
        <dbReference type="UniProtKB" id="B5HDJ6"/>
    </source>
</evidence>
<evidence type="ECO:0000269" key="2">
    <source>
    </source>
</evidence>
<evidence type="ECO:0000269" key="3">
    <source>
    </source>
</evidence>
<evidence type="ECO:0000269" key="4">
    <source>
    </source>
</evidence>
<evidence type="ECO:0000303" key="5">
    <source>
    </source>
</evidence>
<evidence type="ECO:0000305" key="6"/>
<evidence type="ECO:0000305" key="7">
    <source>
    </source>
</evidence>
<evidence type="ECO:0000312" key="8">
    <source>
        <dbReference type="EMBL" id="EFL30447.1"/>
    </source>
</evidence>
<evidence type="ECO:0000312" key="9">
    <source>
        <dbReference type="Proteomes" id="UP000004184"/>
    </source>
</evidence>